<feature type="chain" id="PRO_0000236776" description="Tyrosine--tRNA ligase 2">
    <location>
        <begin position="1"/>
        <end position="395"/>
    </location>
</feature>
<feature type="domain" description="S4 RNA-binding" evidence="1">
    <location>
        <begin position="334"/>
        <end position="394"/>
    </location>
</feature>
<feature type="short sequence motif" description="'HIGH' region">
    <location>
        <begin position="42"/>
        <end position="51"/>
    </location>
</feature>
<feature type="short sequence motif" description="'KMSKS' region">
    <location>
        <begin position="226"/>
        <end position="230"/>
    </location>
</feature>
<feature type="binding site" evidence="1">
    <location>
        <position position="229"/>
    </location>
    <ligand>
        <name>ATP</name>
        <dbReference type="ChEBI" id="CHEBI:30616"/>
    </ligand>
</feature>
<accession>Q9KU92</accession>
<dbReference type="EC" id="6.1.1.1" evidence="1"/>
<dbReference type="EMBL" id="AE003852">
    <property type="protein sequence ID" value="AAF93797.1"/>
    <property type="molecule type" value="Genomic_DNA"/>
</dbReference>
<dbReference type="PIR" id="G82298">
    <property type="entry name" value="G82298"/>
</dbReference>
<dbReference type="RefSeq" id="NP_230280.1">
    <property type="nucleotide sequence ID" value="NC_002505.1"/>
</dbReference>
<dbReference type="SMR" id="Q9KU92"/>
<dbReference type="STRING" id="243277.VC_0631"/>
<dbReference type="DNASU" id="2615419"/>
<dbReference type="EnsemblBacteria" id="AAF93797">
    <property type="protein sequence ID" value="AAF93797"/>
    <property type="gene ID" value="VC_0631"/>
</dbReference>
<dbReference type="KEGG" id="vch:VC_0631"/>
<dbReference type="PATRIC" id="fig|243277.26.peg.601"/>
<dbReference type="eggNOG" id="COG0162">
    <property type="taxonomic scope" value="Bacteria"/>
</dbReference>
<dbReference type="HOGENOM" id="CLU_024003_5_0_6"/>
<dbReference type="Proteomes" id="UP000000584">
    <property type="component" value="Chromosome 1"/>
</dbReference>
<dbReference type="GO" id="GO:0005829">
    <property type="term" value="C:cytosol"/>
    <property type="evidence" value="ECO:0000318"/>
    <property type="project" value="GO_Central"/>
</dbReference>
<dbReference type="GO" id="GO:0005524">
    <property type="term" value="F:ATP binding"/>
    <property type="evidence" value="ECO:0007669"/>
    <property type="project" value="UniProtKB-UniRule"/>
</dbReference>
<dbReference type="GO" id="GO:0003723">
    <property type="term" value="F:RNA binding"/>
    <property type="evidence" value="ECO:0007669"/>
    <property type="project" value="UniProtKB-KW"/>
</dbReference>
<dbReference type="GO" id="GO:0004831">
    <property type="term" value="F:tyrosine-tRNA ligase activity"/>
    <property type="evidence" value="ECO:0000318"/>
    <property type="project" value="GO_Central"/>
</dbReference>
<dbReference type="GO" id="GO:0043039">
    <property type="term" value="P:tRNA aminoacylation"/>
    <property type="evidence" value="ECO:0000318"/>
    <property type="project" value="GO_Central"/>
</dbReference>
<dbReference type="GO" id="GO:0006437">
    <property type="term" value="P:tyrosyl-tRNA aminoacylation"/>
    <property type="evidence" value="ECO:0007669"/>
    <property type="project" value="UniProtKB-UniRule"/>
</dbReference>
<dbReference type="CDD" id="cd00165">
    <property type="entry name" value="S4"/>
    <property type="match status" value="1"/>
</dbReference>
<dbReference type="CDD" id="cd00805">
    <property type="entry name" value="TyrRS_core"/>
    <property type="match status" value="1"/>
</dbReference>
<dbReference type="FunFam" id="1.10.240.10:FF:000006">
    <property type="entry name" value="Tyrosine--tRNA ligase"/>
    <property type="match status" value="1"/>
</dbReference>
<dbReference type="FunFam" id="3.10.290.10:FF:000022">
    <property type="entry name" value="Tyrosine--tRNA ligase"/>
    <property type="match status" value="1"/>
</dbReference>
<dbReference type="FunFam" id="3.40.50.620:FF:000061">
    <property type="entry name" value="Tyrosine--tRNA ligase"/>
    <property type="match status" value="1"/>
</dbReference>
<dbReference type="Gene3D" id="3.40.50.620">
    <property type="entry name" value="HUPs"/>
    <property type="match status" value="1"/>
</dbReference>
<dbReference type="Gene3D" id="3.10.290.10">
    <property type="entry name" value="RNA-binding S4 domain"/>
    <property type="match status" value="1"/>
</dbReference>
<dbReference type="Gene3D" id="1.10.240.10">
    <property type="entry name" value="Tyrosyl-Transfer RNA Synthetase"/>
    <property type="match status" value="1"/>
</dbReference>
<dbReference type="HAMAP" id="MF_02007">
    <property type="entry name" value="Tyr_tRNA_synth_type2"/>
    <property type="match status" value="1"/>
</dbReference>
<dbReference type="InterPro" id="IPR001412">
    <property type="entry name" value="aa-tRNA-synth_I_CS"/>
</dbReference>
<dbReference type="InterPro" id="IPR002305">
    <property type="entry name" value="aa-tRNA-synth_Ic"/>
</dbReference>
<dbReference type="InterPro" id="IPR014729">
    <property type="entry name" value="Rossmann-like_a/b/a_fold"/>
</dbReference>
<dbReference type="InterPro" id="IPR002942">
    <property type="entry name" value="S4_RNA-bd"/>
</dbReference>
<dbReference type="InterPro" id="IPR036986">
    <property type="entry name" value="S4_RNA-bd_sf"/>
</dbReference>
<dbReference type="InterPro" id="IPR002307">
    <property type="entry name" value="Tyr-tRNA-ligase"/>
</dbReference>
<dbReference type="InterPro" id="IPR024088">
    <property type="entry name" value="Tyr-tRNA-ligase_bac-type"/>
</dbReference>
<dbReference type="InterPro" id="IPR024108">
    <property type="entry name" value="Tyr-tRNA-ligase_bac_2"/>
</dbReference>
<dbReference type="NCBIfam" id="TIGR00234">
    <property type="entry name" value="tyrS"/>
    <property type="match status" value="1"/>
</dbReference>
<dbReference type="PANTHER" id="PTHR11766:SF1">
    <property type="entry name" value="TYROSINE--TRNA LIGASE"/>
    <property type="match status" value="1"/>
</dbReference>
<dbReference type="PANTHER" id="PTHR11766">
    <property type="entry name" value="TYROSYL-TRNA SYNTHETASE"/>
    <property type="match status" value="1"/>
</dbReference>
<dbReference type="Pfam" id="PF01479">
    <property type="entry name" value="S4"/>
    <property type="match status" value="1"/>
</dbReference>
<dbReference type="Pfam" id="PF00579">
    <property type="entry name" value="tRNA-synt_1b"/>
    <property type="match status" value="1"/>
</dbReference>
<dbReference type="PRINTS" id="PR01040">
    <property type="entry name" value="TRNASYNTHTYR"/>
</dbReference>
<dbReference type="SMART" id="SM00363">
    <property type="entry name" value="S4"/>
    <property type="match status" value="1"/>
</dbReference>
<dbReference type="SUPFAM" id="SSF55174">
    <property type="entry name" value="Alpha-L RNA-binding motif"/>
    <property type="match status" value="1"/>
</dbReference>
<dbReference type="SUPFAM" id="SSF52374">
    <property type="entry name" value="Nucleotidylyl transferase"/>
    <property type="match status" value="1"/>
</dbReference>
<dbReference type="PROSITE" id="PS00178">
    <property type="entry name" value="AA_TRNA_LIGASE_I"/>
    <property type="match status" value="1"/>
</dbReference>
<dbReference type="PROSITE" id="PS50889">
    <property type="entry name" value="S4"/>
    <property type="match status" value="1"/>
</dbReference>
<protein>
    <recommendedName>
        <fullName evidence="1">Tyrosine--tRNA ligase 2</fullName>
        <ecNumber evidence="1">6.1.1.1</ecNumber>
    </recommendedName>
    <alternativeName>
        <fullName evidence="1">Tyrosyl-tRNA synthetase 2</fullName>
        <shortName evidence="1">TyrRS 2</shortName>
    </alternativeName>
</protein>
<gene>
    <name evidence="1" type="primary">tyrS2</name>
    <name type="ordered locus">VC_0631</name>
</gene>
<sequence>MASIEAALAEIKRGVEELIPEEELIAKLKENRPLRIKLGADPTAPDIHLGHTVILNKLRTFQDLGHDVTFLIGDFTGMVGDPTGKNTTRPPLTREDVLRNAETYKQQVFKILDPAKTKIQFNSEWLSKLGAEGMIRLASNQTVARMLERDDFKKRYNNGQPIAIHEFMYPLLQGYDSVAMETDVELGGTDQKFNLLMGRELQKANGQKPQVVLMMPLLVGLDGEKKMSKSAHNYIGVSEAPSEMFGKIMSISDDLMWSYYELLSFRPLEEVAQFKAEVANGANPRDIKILLAKEIIARFHSQADADAAEQEFINRFQKGAMPEEMPEFEFESGIAISNLLKEAGLVASTSDALRMIKQGAVKLDGEKLEDAKLIPACGTSVYQVGKRKFARVTIK</sequence>
<comment type="function">
    <text evidence="1">Catalyzes the attachment of tyrosine to tRNA(Tyr) in a two-step reaction: tyrosine is first activated by ATP to form Tyr-AMP and then transferred to the acceptor end of tRNA(Tyr).</text>
</comment>
<comment type="catalytic activity">
    <reaction evidence="1">
        <text>tRNA(Tyr) + L-tyrosine + ATP = L-tyrosyl-tRNA(Tyr) + AMP + diphosphate + H(+)</text>
        <dbReference type="Rhea" id="RHEA:10220"/>
        <dbReference type="Rhea" id="RHEA-COMP:9706"/>
        <dbReference type="Rhea" id="RHEA-COMP:9707"/>
        <dbReference type="ChEBI" id="CHEBI:15378"/>
        <dbReference type="ChEBI" id="CHEBI:30616"/>
        <dbReference type="ChEBI" id="CHEBI:33019"/>
        <dbReference type="ChEBI" id="CHEBI:58315"/>
        <dbReference type="ChEBI" id="CHEBI:78442"/>
        <dbReference type="ChEBI" id="CHEBI:78536"/>
        <dbReference type="ChEBI" id="CHEBI:456215"/>
        <dbReference type="EC" id="6.1.1.1"/>
    </reaction>
</comment>
<comment type="subunit">
    <text evidence="1">Homodimer.</text>
</comment>
<comment type="subcellular location">
    <subcellularLocation>
        <location evidence="1">Cytoplasm</location>
    </subcellularLocation>
</comment>
<comment type="similarity">
    <text evidence="1">Belongs to the class-I aminoacyl-tRNA synthetase family. TyrS type 2 subfamily.</text>
</comment>
<name>SYY2_VIBCH</name>
<proteinExistence type="inferred from homology"/>
<keyword id="KW-0030">Aminoacyl-tRNA synthetase</keyword>
<keyword id="KW-0067">ATP-binding</keyword>
<keyword id="KW-0963">Cytoplasm</keyword>
<keyword id="KW-0436">Ligase</keyword>
<keyword id="KW-0547">Nucleotide-binding</keyword>
<keyword id="KW-0648">Protein biosynthesis</keyword>
<keyword id="KW-1185">Reference proteome</keyword>
<keyword id="KW-0694">RNA-binding</keyword>
<reference key="1">
    <citation type="journal article" date="2000" name="Nature">
        <title>DNA sequence of both chromosomes of the cholera pathogen Vibrio cholerae.</title>
        <authorList>
            <person name="Heidelberg J.F."/>
            <person name="Eisen J.A."/>
            <person name="Nelson W.C."/>
            <person name="Clayton R.A."/>
            <person name="Gwinn M.L."/>
            <person name="Dodson R.J."/>
            <person name="Haft D.H."/>
            <person name="Hickey E.K."/>
            <person name="Peterson J.D."/>
            <person name="Umayam L.A."/>
            <person name="Gill S.R."/>
            <person name="Nelson K.E."/>
            <person name="Read T.D."/>
            <person name="Tettelin H."/>
            <person name="Richardson D.L."/>
            <person name="Ermolaeva M.D."/>
            <person name="Vamathevan J.J."/>
            <person name="Bass S."/>
            <person name="Qin H."/>
            <person name="Dragoi I."/>
            <person name="Sellers P."/>
            <person name="McDonald L.A."/>
            <person name="Utterback T.R."/>
            <person name="Fleischmann R.D."/>
            <person name="Nierman W.C."/>
            <person name="White O."/>
            <person name="Salzberg S.L."/>
            <person name="Smith H.O."/>
            <person name="Colwell R.R."/>
            <person name="Mekalanos J.J."/>
            <person name="Venter J.C."/>
            <person name="Fraser C.M."/>
        </authorList>
    </citation>
    <scope>NUCLEOTIDE SEQUENCE [LARGE SCALE GENOMIC DNA]</scope>
    <source>
        <strain>ATCC 39315 / El Tor Inaba N16961</strain>
    </source>
</reference>
<organism>
    <name type="scientific">Vibrio cholerae serotype O1 (strain ATCC 39315 / El Tor Inaba N16961)</name>
    <dbReference type="NCBI Taxonomy" id="243277"/>
    <lineage>
        <taxon>Bacteria</taxon>
        <taxon>Pseudomonadati</taxon>
        <taxon>Pseudomonadota</taxon>
        <taxon>Gammaproteobacteria</taxon>
        <taxon>Vibrionales</taxon>
        <taxon>Vibrionaceae</taxon>
        <taxon>Vibrio</taxon>
    </lineage>
</organism>
<evidence type="ECO:0000255" key="1">
    <source>
        <dbReference type="HAMAP-Rule" id="MF_02007"/>
    </source>
</evidence>